<accession>Q98DZ0</accession>
<gene>
    <name evidence="1" type="primary">mnmE</name>
    <name evidence="1" type="synonym">trmE</name>
    <name type="ordered locus">mll4483</name>
</gene>
<comment type="function">
    <text evidence="1">Exhibits a very high intrinsic GTPase hydrolysis rate. Involved in the addition of a carboxymethylaminomethyl (cmnm) group at the wobble position (U34) of certain tRNAs, forming tRNA-cmnm(5)s(2)U34.</text>
</comment>
<comment type="cofactor">
    <cofactor evidence="1">
        <name>K(+)</name>
        <dbReference type="ChEBI" id="CHEBI:29103"/>
    </cofactor>
    <text evidence="1">Binds 1 potassium ion per subunit.</text>
</comment>
<comment type="subunit">
    <text evidence="1">Homodimer. Heterotetramer of two MnmE and two MnmG subunits.</text>
</comment>
<comment type="subcellular location">
    <subcellularLocation>
        <location evidence="1">Cytoplasm</location>
    </subcellularLocation>
</comment>
<comment type="similarity">
    <text evidence="1">Belongs to the TRAFAC class TrmE-Era-EngA-EngB-Septin-like GTPase superfamily. TrmE GTPase family.</text>
</comment>
<feature type="chain" id="PRO_0000345884" description="tRNA modification GTPase MnmE">
    <location>
        <begin position="1"/>
        <end position="443"/>
    </location>
</feature>
<feature type="domain" description="TrmE-type G">
    <location>
        <begin position="217"/>
        <end position="367"/>
    </location>
</feature>
<feature type="binding site" evidence="1">
    <location>
        <position position="23"/>
    </location>
    <ligand>
        <name>(6S)-5-formyl-5,6,7,8-tetrahydrofolate</name>
        <dbReference type="ChEBI" id="CHEBI:57457"/>
    </ligand>
</feature>
<feature type="binding site" evidence="1">
    <location>
        <position position="80"/>
    </location>
    <ligand>
        <name>(6S)-5-formyl-5,6,7,8-tetrahydrofolate</name>
        <dbReference type="ChEBI" id="CHEBI:57457"/>
    </ligand>
</feature>
<feature type="binding site" evidence="1">
    <location>
        <position position="120"/>
    </location>
    <ligand>
        <name>(6S)-5-formyl-5,6,7,8-tetrahydrofolate</name>
        <dbReference type="ChEBI" id="CHEBI:57457"/>
    </ligand>
</feature>
<feature type="binding site" evidence="1">
    <location>
        <begin position="227"/>
        <end position="232"/>
    </location>
    <ligand>
        <name>GTP</name>
        <dbReference type="ChEBI" id="CHEBI:37565"/>
    </ligand>
</feature>
<feature type="binding site" evidence="1">
    <location>
        <position position="231"/>
    </location>
    <ligand>
        <name>Mg(2+)</name>
        <dbReference type="ChEBI" id="CHEBI:18420"/>
    </ligand>
</feature>
<feature type="binding site" evidence="1">
    <location>
        <begin position="246"/>
        <end position="252"/>
    </location>
    <ligand>
        <name>GTP</name>
        <dbReference type="ChEBI" id="CHEBI:37565"/>
    </ligand>
</feature>
<feature type="binding site" evidence="1">
    <location>
        <position position="252"/>
    </location>
    <ligand>
        <name>Mg(2+)</name>
        <dbReference type="ChEBI" id="CHEBI:18420"/>
    </ligand>
</feature>
<feature type="binding site" evidence="1">
    <location>
        <begin position="271"/>
        <end position="274"/>
    </location>
    <ligand>
        <name>GTP</name>
        <dbReference type="ChEBI" id="CHEBI:37565"/>
    </ligand>
</feature>
<feature type="binding site" evidence="1">
    <location>
        <position position="443"/>
    </location>
    <ligand>
        <name>(6S)-5-formyl-5,6,7,8-tetrahydrofolate</name>
        <dbReference type="ChEBI" id="CHEBI:57457"/>
    </ligand>
</feature>
<evidence type="ECO:0000255" key="1">
    <source>
        <dbReference type="HAMAP-Rule" id="MF_00379"/>
    </source>
</evidence>
<keyword id="KW-0963">Cytoplasm</keyword>
<keyword id="KW-0342">GTP-binding</keyword>
<keyword id="KW-0378">Hydrolase</keyword>
<keyword id="KW-0460">Magnesium</keyword>
<keyword id="KW-0479">Metal-binding</keyword>
<keyword id="KW-0547">Nucleotide-binding</keyword>
<keyword id="KW-0630">Potassium</keyword>
<keyword id="KW-0819">tRNA processing</keyword>
<organism>
    <name type="scientific">Mesorhizobium japonicum (strain LMG 29417 / CECT 9101 / MAFF 303099)</name>
    <name type="common">Mesorhizobium loti (strain MAFF 303099)</name>
    <dbReference type="NCBI Taxonomy" id="266835"/>
    <lineage>
        <taxon>Bacteria</taxon>
        <taxon>Pseudomonadati</taxon>
        <taxon>Pseudomonadota</taxon>
        <taxon>Alphaproteobacteria</taxon>
        <taxon>Hyphomicrobiales</taxon>
        <taxon>Phyllobacteriaceae</taxon>
        <taxon>Mesorhizobium</taxon>
    </lineage>
</organism>
<protein>
    <recommendedName>
        <fullName evidence="1">tRNA modification GTPase MnmE</fullName>
        <ecNumber evidence="1">3.6.-.-</ecNumber>
    </recommendedName>
</protein>
<proteinExistence type="inferred from homology"/>
<name>MNME_RHILO</name>
<reference key="1">
    <citation type="journal article" date="2000" name="DNA Res.">
        <title>Complete genome structure of the nitrogen-fixing symbiotic bacterium Mesorhizobium loti.</title>
        <authorList>
            <person name="Kaneko T."/>
            <person name="Nakamura Y."/>
            <person name="Sato S."/>
            <person name="Asamizu E."/>
            <person name="Kato T."/>
            <person name="Sasamoto S."/>
            <person name="Watanabe A."/>
            <person name="Idesawa K."/>
            <person name="Ishikawa A."/>
            <person name="Kawashima K."/>
            <person name="Kimura T."/>
            <person name="Kishida Y."/>
            <person name="Kiyokawa C."/>
            <person name="Kohara M."/>
            <person name="Matsumoto M."/>
            <person name="Matsuno A."/>
            <person name="Mochizuki Y."/>
            <person name="Nakayama S."/>
            <person name="Nakazaki N."/>
            <person name="Shimpo S."/>
            <person name="Sugimoto M."/>
            <person name="Takeuchi C."/>
            <person name="Yamada M."/>
            <person name="Tabata S."/>
        </authorList>
    </citation>
    <scope>NUCLEOTIDE SEQUENCE [LARGE SCALE GENOMIC DNA]</scope>
    <source>
        <strain>LMG 29417 / CECT 9101 / MAFF 303099</strain>
    </source>
</reference>
<dbReference type="EC" id="3.6.-.-" evidence="1"/>
<dbReference type="EMBL" id="BA000012">
    <property type="protein sequence ID" value="BAB51130.1"/>
    <property type="molecule type" value="Genomic_DNA"/>
</dbReference>
<dbReference type="RefSeq" id="WP_010912472.1">
    <property type="nucleotide sequence ID" value="NC_002678.2"/>
</dbReference>
<dbReference type="SMR" id="Q98DZ0"/>
<dbReference type="KEGG" id="mlo:mll4483"/>
<dbReference type="PATRIC" id="fig|266835.9.peg.3543"/>
<dbReference type="eggNOG" id="COG0486">
    <property type="taxonomic scope" value="Bacteria"/>
</dbReference>
<dbReference type="HOGENOM" id="CLU_019624_3_1_5"/>
<dbReference type="Proteomes" id="UP000000552">
    <property type="component" value="Chromosome"/>
</dbReference>
<dbReference type="GO" id="GO:0005737">
    <property type="term" value="C:cytoplasm"/>
    <property type="evidence" value="ECO:0007669"/>
    <property type="project" value="UniProtKB-SubCell"/>
</dbReference>
<dbReference type="GO" id="GO:0005525">
    <property type="term" value="F:GTP binding"/>
    <property type="evidence" value="ECO:0007669"/>
    <property type="project" value="UniProtKB-UniRule"/>
</dbReference>
<dbReference type="GO" id="GO:0003924">
    <property type="term" value="F:GTPase activity"/>
    <property type="evidence" value="ECO:0007669"/>
    <property type="project" value="UniProtKB-UniRule"/>
</dbReference>
<dbReference type="GO" id="GO:0046872">
    <property type="term" value="F:metal ion binding"/>
    <property type="evidence" value="ECO:0007669"/>
    <property type="project" value="UniProtKB-KW"/>
</dbReference>
<dbReference type="GO" id="GO:0030488">
    <property type="term" value="P:tRNA methylation"/>
    <property type="evidence" value="ECO:0007669"/>
    <property type="project" value="TreeGrafter"/>
</dbReference>
<dbReference type="GO" id="GO:0002098">
    <property type="term" value="P:tRNA wobble uridine modification"/>
    <property type="evidence" value="ECO:0007669"/>
    <property type="project" value="TreeGrafter"/>
</dbReference>
<dbReference type="CDD" id="cd04164">
    <property type="entry name" value="trmE"/>
    <property type="match status" value="1"/>
</dbReference>
<dbReference type="CDD" id="cd14858">
    <property type="entry name" value="TrmE_N"/>
    <property type="match status" value="1"/>
</dbReference>
<dbReference type="FunFam" id="3.30.1360.120:FF:000007">
    <property type="entry name" value="tRNA modification GTPase GTPBP3, mitochondrial"/>
    <property type="match status" value="1"/>
</dbReference>
<dbReference type="Gene3D" id="3.40.50.300">
    <property type="entry name" value="P-loop containing nucleotide triphosphate hydrolases"/>
    <property type="match status" value="1"/>
</dbReference>
<dbReference type="Gene3D" id="3.30.1360.120">
    <property type="entry name" value="Probable tRNA modification gtpase trme, domain 1"/>
    <property type="match status" value="1"/>
</dbReference>
<dbReference type="Gene3D" id="1.20.120.430">
    <property type="entry name" value="tRNA modification GTPase MnmE domain 2"/>
    <property type="match status" value="1"/>
</dbReference>
<dbReference type="HAMAP" id="MF_00379">
    <property type="entry name" value="GTPase_MnmE"/>
    <property type="match status" value="1"/>
</dbReference>
<dbReference type="InterPro" id="IPR031168">
    <property type="entry name" value="G_TrmE"/>
</dbReference>
<dbReference type="InterPro" id="IPR006073">
    <property type="entry name" value="GTP-bd"/>
</dbReference>
<dbReference type="InterPro" id="IPR018948">
    <property type="entry name" value="GTP-bd_TrmE_N"/>
</dbReference>
<dbReference type="InterPro" id="IPR004520">
    <property type="entry name" value="GTPase_MnmE"/>
</dbReference>
<dbReference type="InterPro" id="IPR027368">
    <property type="entry name" value="MnmE_dom2"/>
</dbReference>
<dbReference type="InterPro" id="IPR025867">
    <property type="entry name" value="MnmE_helical"/>
</dbReference>
<dbReference type="InterPro" id="IPR027417">
    <property type="entry name" value="P-loop_NTPase"/>
</dbReference>
<dbReference type="InterPro" id="IPR005225">
    <property type="entry name" value="Small_GTP-bd"/>
</dbReference>
<dbReference type="InterPro" id="IPR027266">
    <property type="entry name" value="TrmE/GcvT_dom1"/>
</dbReference>
<dbReference type="NCBIfam" id="NF003661">
    <property type="entry name" value="PRK05291.1-3"/>
    <property type="match status" value="1"/>
</dbReference>
<dbReference type="NCBIfam" id="TIGR00231">
    <property type="entry name" value="small_GTP"/>
    <property type="match status" value="1"/>
</dbReference>
<dbReference type="PANTHER" id="PTHR42714">
    <property type="entry name" value="TRNA MODIFICATION GTPASE GTPBP3"/>
    <property type="match status" value="1"/>
</dbReference>
<dbReference type="PANTHER" id="PTHR42714:SF2">
    <property type="entry name" value="TRNA MODIFICATION GTPASE GTPBP3, MITOCHONDRIAL"/>
    <property type="match status" value="1"/>
</dbReference>
<dbReference type="Pfam" id="PF01926">
    <property type="entry name" value="MMR_HSR1"/>
    <property type="match status" value="1"/>
</dbReference>
<dbReference type="Pfam" id="PF12631">
    <property type="entry name" value="MnmE_helical"/>
    <property type="match status" value="1"/>
</dbReference>
<dbReference type="Pfam" id="PF10396">
    <property type="entry name" value="TrmE_N"/>
    <property type="match status" value="1"/>
</dbReference>
<dbReference type="PRINTS" id="PR00449">
    <property type="entry name" value="RASTRNSFRMNG"/>
</dbReference>
<dbReference type="SUPFAM" id="SSF52540">
    <property type="entry name" value="P-loop containing nucleoside triphosphate hydrolases"/>
    <property type="match status" value="1"/>
</dbReference>
<dbReference type="SUPFAM" id="SSF116878">
    <property type="entry name" value="TrmE connector domain"/>
    <property type="match status" value="1"/>
</dbReference>
<dbReference type="PROSITE" id="PS51709">
    <property type="entry name" value="G_TRME"/>
    <property type="match status" value="1"/>
</dbReference>
<sequence>MISGDSIVALSSGRLPAGVAVLRISGPQTRFVVETIAGGMVKDRVAVLRRFKAPDGTVLDSGLVIFFPGPASFTGEDVAEFHVHGGRAVVARMLEIISGFDGVRHAEPGEFTRRAFLNGKVDLVETEALADLVNAETEAQRRFAVRNAEGVQSELYLSWRRRLIHARAMIEAEIDFADEDDVPGSVSDTVWSDVRAMIGEIDRHIAGFHAAEIIREGFEVVILGAPNAGKSSLFNALARRDAAIVTDEPGTTRDLLEVTLDLGGLRVRLTDTAGLREAPGKVEAIGIEKARAKADRADLLLLLEDILAPGVLGPLPGKAPLLRVGTKLDLLDEGSAREAAGRYDVAISVVGGTGVEALLAEIGRRAADAAGDVGDVLPSRLRHVELLGEANRHLLRAAAEDAAGQELRAEELRLAADSLGRIVGAIDVEDMLDVIFSQFCIGK</sequence>